<accession>Q12765</accession>
<accession>A8K0E9</accession>
<accession>B4DHM0</accession>
<accession>B4DIP5</accession>
<accession>C9JPG0</accession>
<accession>Q25QX7</accession>
<accession>Q8IWD1</accession>
<proteinExistence type="evidence at protein level"/>
<dbReference type="EMBL" id="AB071705">
    <property type="protein sequence ID" value="BAE91926.1"/>
    <property type="molecule type" value="mRNA"/>
</dbReference>
<dbReference type="EMBL" id="D83777">
    <property type="protein sequence ID" value="BAA12106.2"/>
    <property type="status" value="ALT_INIT"/>
    <property type="molecule type" value="mRNA"/>
</dbReference>
<dbReference type="EMBL" id="AK289514">
    <property type="protein sequence ID" value="BAF82203.1"/>
    <property type="molecule type" value="mRNA"/>
</dbReference>
<dbReference type="EMBL" id="AK295172">
    <property type="protein sequence ID" value="BAG58182.1"/>
    <property type="molecule type" value="mRNA"/>
</dbReference>
<dbReference type="EMBL" id="AK295713">
    <property type="protein sequence ID" value="BAG58557.1"/>
    <property type="molecule type" value="mRNA"/>
</dbReference>
<dbReference type="EMBL" id="AC004912">
    <property type="protein sequence ID" value="AAQ96874.1"/>
    <property type="molecule type" value="Genomic_DNA"/>
</dbReference>
<dbReference type="EMBL" id="AC007285">
    <property type="status" value="NOT_ANNOTATED_CDS"/>
    <property type="molecule type" value="Genomic_DNA"/>
</dbReference>
<dbReference type="EMBL" id="CH471073">
    <property type="protein sequence ID" value="EAW93926.1"/>
    <property type="molecule type" value="Genomic_DNA"/>
</dbReference>
<dbReference type="EMBL" id="CH471073">
    <property type="protein sequence ID" value="EAW93928.1"/>
    <property type="molecule type" value="Genomic_DNA"/>
</dbReference>
<dbReference type="EMBL" id="BC040492">
    <property type="protein sequence ID" value="AAH40492.1"/>
    <property type="molecule type" value="mRNA"/>
</dbReference>
<dbReference type="CCDS" id="CCDS47567.1">
    <molecule id="Q12765-2"/>
</dbReference>
<dbReference type="CCDS" id="CCDS47568.1">
    <molecule id="Q12765-3"/>
</dbReference>
<dbReference type="CCDS" id="CCDS5422.1">
    <molecule id="Q12765-1"/>
</dbReference>
<dbReference type="RefSeq" id="NP_001138985.1">
    <molecule id="Q12765-1"/>
    <property type="nucleotide sequence ID" value="NM_001145513.1"/>
</dbReference>
<dbReference type="RefSeq" id="NP_001138986.1">
    <molecule id="Q12765-2"/>
    <property type="nucleotide sequence ID" value="NM_001145514.1"/>
</dbReference>
<dbReference type="RefSeq" id="NP_001138987.1">
    <molecule id="Q12765-3"/>
    <property type="nucleotide sequence ID" value="NM_001145515.2"/>
</dbReference>
<dbReference type="RefSeq" id="NP_055581.3">
    <molecule id="Q12765-1"/>
    <property type="nucleotide sequence ID" value="NM_014766.4"/>
</dbReference>
<dbReference type="RefSeq" id="XP_047277041.1">
    <molecule id="Q12765-3"/>
    <property type="nucleotide sequence ID" value="XM_047421085.1"/>
</dbReference>
<dbReference type="RefSeq" id="XP_054215398.1">
    <molecule id="Q12765-3"/>
    <property type="nucleotide sequence ID" value="XM_054359423.1"/>
</dbReference>
<dbReference type="SMR" id="Q12765"/>
<dbReference type="BioGRID" id="115145">
    <property type="interactions" value="56"/>
</dbReference>
<dbReference type="FunCoup" id="Q12765">
    <property type="interactions" value="560"/>
</dbReference>
<dbReference type="IntAct" id="Q12765">
    <property type="interactions" value="33"/>
</dbReference>
<dbReference type="MINT" id="Q12765"/>
<dbReference type="STRING" id="9606.ENSP00000388942"/>
<dbReference type="MEROPS" id="C69.003"/>
<dbReference type="GlyGen" id="Q12765">
    <property type="glycosylation" value="1 site, 1 O-linked glycan (1 site)"/>
</dbReference>
<dbReference type="iPTMnet" id="Q12765"/>
<dbReference type="MetOSite" id="Q12765"/>
<dbReference type="PhosphoSitePlus" id="Q12765"/>
<dbReference type="SwissPalm" id="Q12765"/>
<dbReference type="BioMuta" id="SCRN1"/>
<dbReference type="DMDM" id="30923294"/>
<dbReference type="OGP" id="Q12765"/>
<dbReference type="jPOST" id="Q12765"/>
<dbReference type="MassIVE" id="Q12765"/>
<dbReference type="PaxDb" id="9606-ENSP00000388942"/>
<dbReference type="PeptideAtlas" id="Q12765"/>
<dbReference type="ProteomicsDB" id="11103"/>
<dbReference type="ProteomicsDB" id="4315"/>
<dbReference type="ProteomicsDB" id="58907">
    <molecule id="Q12765-1"/>
</dbReference>
<dbReference type="Pumba" id="Q12765"/>
<dbReference type="Antibodypedia" id="12563">
    <property type="antibodies" value="189 antibodies from 30 providers"/>
</dbReference>
<dbReference type="DNASU" id="9805"/>
<dbReference type="Ensembl" id="ENST00000242059.10">
    <molecule id="Q12765-1"/>
    <property type="protein sequence ID" value="ENSP00000242059.5"/>
    <property type="gene ID" value="ENSG00000136193.17"/>
</dbReference>
<dbReference type="Ensembl" id="ENST00000409497.5">
    <molecule id="Q12765-1"/>
    <property type="protein sequence ID" value="ENSP00000386872.1"/>
    <property type="gene ID" value="ENSG00000136193.17"/>
</dbReference>
<dbReference type="Ensembl" id="ENST00000425819.6">
    <molecule id="Q12765-3"/>
    <property type="protein sequence ID" value="ENSP00000414245.2"/>
    <property type="gene ID" value="ENSG00000136193.17"/>
</dbReference>
<dbReference type="Ensembl" id="ENST00000426154.5">
    <molecule id="Q12765-1"/>
    <property type="protein sequence ID" value="ENSP00000409068.1"/>
    <property type="gene ID" value="ENSG00000136193.17"/>
</dbReference>
<dbReference type="Ensembl" id="ENST00000434476.6">
    <molecule id="Q12765-2"/>
    <property type="protein sequence ID" value="ENSP00000388942.1"/>
    <property type="gene ID" value="ENSG00000136193.17"/>
</dbReference>
<dbReference type="GeneID" id="9805"/>
<dbReference type="KEGG" id="hsa:9805"/>
<dbReference type="MANE-Select" id="ENST00000242059.10">
    <property type="protein sequence ID" value="ENSP00000242059.5"/>
    <property type="RefSeq nucleotide sequence ID" value="NM_014766.5"/>
    <property type="RefSeq protein sequence ID" value="NP_055581.3"/>
</dbReference>
<dbReference type="UCSC" id="uc003tak.4">
    <molecule id="Q12765-1"/>
    <property type="organism name" value="human"/>
</dbReference>
<dbReference type="AGR" id="HGNC:22192"/>
<dbReference type="CTD" id="9805"/>
<dbReference type="DisGeNET" id="9805"/>
<dbReference type="GeneCards" id="SCRN1"/>
<dbReference type="HGNC" id="HGNC:22192">
    <property type="gene designation" value="SCRN1"/>
</dbReference>
<dbReference type="HPA" id="ENSG00000136193">
    <property type="expression patterns" value="Tissue enhanced (brain)"/>
</dbReference>
<dbReference type="MalaCards" id="SCRN1"/>
<dbReference type="MIM" id="614965">
    <property type="type" value="gene"/>
</dbReference>
<dbReference type="neXtProt" id="NX_Q12765"/>
<dbReference type="OpenTargets" id="ENSG00000136193"/>
<dbReference type="PharmGKB" id="PA134874373"/>
<dbReference type="VEuPathDB" id="HostDB:ENSG00000136193"/>
<dbReference type="eggNOG" id="ENOG502QTSN">
    <property type="taxonomic scope" value="Eukaryota"/>
</dbReference>
<dbReference type="GeneTree" id="ENSGT00390000013474"/>
<dbReference type="HOGENOM" id="CLU_046840_0_0_1"/>
<dbReference type="InParanoid" id="Q12765"/>
<dbReference type="OrthoDB" id="5175656at2759"/>
<dbReference type="PAN-GO" id="Q12765">
    <property type="GO annotations" value="0 GO annotations based on evolutionary models"/>
</dbReference>
<dbReference type="PhylomeDB" id="Q12765"/>
<dbReference type="TreeFam" id="TF323890"/>
<dbReference type="PathwayCommons" id="Q12765"/>
<dbReference type="SignaLink" id="Q12765"/>
<dbReference type="BioGRID-ORCS" id="9805">
    <property type="hits" value="11 hits in 1154 CRISPR screens"/>
</dbReference>
<dbReference type="CD-CODE" id="FB4E32DD">
    <property type="entry name" value="Presynaptic clusters and postsynaptic densities"/>
</dbReference>
<dbReference type="ChiTaRS" id="SCRN1">
    <property type="organism name" value="human"/>
</dbReference>
<dbReference type="GeneWiki" id="SCRN1"/>
<dbReference type="GenomeRNAi" id="9805"/>
<dbReference type="Pharos" id="Q12765">
    <property type="development level" value="Tbio"/>
</dbReference>
<dbReference type="PRO" id="PR:Q12765"/>
<dbReference type="Proteomes" id="UP000005640">
    <property type="component" value="Chromosome 7"/>
</dbReference>
<dbReference type="RNAct" id="Q12765">
    <property type="molecule type" value="protein"/>
</dbReference>
<dbReference type="Bgee" id="ENSG00000136193">
    <property type="expression patterns" value="Expressed in trigeminal ganglion and 201 other cell types or tissues"/>
</dbReference>
<dbReference type="ExpressionAtlas" id="Q12765">
    <property type="expression patterns" value="baseline and differential"/>
</dbReference>
<dbReference type="GO" id="GO:0005737">
    <property type="term" value="C:cytoplasm"/>
    <property type="evidence" value="ECO:0007669"/>
    <property type="project" value="UniProtKB-SubCell"/>
</dbReference>
<dbReference type="GO" id="GO:0031965">
    <property type="term" value="C:nuclear membrane"/>
    <property type="evidence" value="ECO:0000314"/>
    <property type="project" value="UniProtKB"/>
</dbReference>
<dbReference type="GO" id="GO:0005634">
    <property type="term" value="C:nucleus"/>
    <property type="evidence" value="ECO:0000314"/>
    <property type="project" value="UniProtKB"/>
</dbReference>
<dbReference type="GO" id="GO:0098793">
    <property type="term" value="C:presynapse"/>
    <property type="evidence" value="ECO:0007669"/>
    <property type="project" value="Ensembl"/>
</dbReference>
<dbReference type="GO" id="GO:0070004">
    <property type="term" value="F:cysteine-type exopeptidase activity"/>
    <property type="evidence" value="ECO:0007669"/>
    <property type="project" value="InterPro"/>
</dbReference>
<dbReference type="GO" id="GO:0016805">
    <property type="term" value="F:dipeptidase activity"/>
    <property type="evidence" value="ECO:0007669"/>
    <property type="project" value="InterPro"/>
</dbReference>
<dbReference type="GO" id="GO:0006887">
    <property type="term" value="P:exocytosis"/>
    <property type="evidence" value="ECO:0000250"/>
    <property type="project" value="UniProtKB"/>
</dbReference>
<dbReference type="GO" id="GO:0006508">
    <property type="term" value="P:proteolysis"/>
    <property type="evidence" value="ECO:0007669"/>
    <property type="project" value="InterPro"/>
</dbReference>
<dbReference type="GO" id="GO:0098693">
    <property type="term" value="P:regulation of synaptic vesicle cycle"/>
    <property type="evidence" value="ECO:0007669"/>
    <property type="project" value="Ensembl"/>
</dbReference>
<dbReference type="FunFam" id="3.60.60.10:FF:000001">
    <property type="entry name" value="Secernin 1"/>
    <property type="match status" value="1"/>
</dbReference>
<dbReference type="Gene3D" id="3.60.60.10">
    <property type="entry name" value="Penicillin V Acylase, Chain A"/>
    <property type="match status" value="1"/>
</dbReference>
<dbReference type="InterPro" id="IPR005322">
    <property type="entry name" value="Peptidase_C69"/>
</dbReference>
<dbReference type="PANTHER" id="PTHR12994">
    <property type="entry name" value="SECERNIN"/>
    <property type="match status" value="1"/>
</dbReference>
<dbReference type="PANTHER" id="PTHR12994:SF7">
    <property type="entry name" value="SECERNIN-1"/>
    <property type="match status" value="1"/>
</dbReference>
<dbReference type="Pfam" id="PF03577">
    <property type="entry name" value="Peptidase_C69"/>
    <property type="match status" value="1"/>
</dbReference>
<sequence length="414" mass="46382">MAAAPPSYCFVAFPPRAKDGLVVFGKNSARPRDEVQEVVYFSAADHEPESKVECTYISIDQVPRTYAIMISRPAWLWGAEMGANEHGVCIANEAINTREPAAEIEALLGMDLVRLGLERGETAKEALDVIVSLLEEHGQGGNYFEDANSCHSFQSAYLIVDRDEAWVLETIGKYWAAEKVTEGVRCICSQLSLTTKMDAEHPELRSYAQSQGWWTGEGEFNFSEVFSPVEDHLDCGAGKDSLEKQEESITVQTMMNTLRDKASGVCIDSEFFLTTASGVSVLPQNRSSPCIHYFTGTPDPSRSIFKPFIFVDDVKLVPKTQSPCFGDDDPAKKEPRFQEKPDRRHELYKAHEWARAIIESDQEQGRKLRSTMLELEKQGLEAMEEILTSSEPLDPAEVGDLFYDCVDTEIKFFK</sequence>
<feature type="initiator methionine" description="Removed" evidence="5">
    <location>
        <position position="1"/>
    </location>
</feature>
<feature type="chain" id="PRO_0000221436" description="Secernin-1">
    <location>
        <begin position="2"/>
        <end position="414"/>
    </location>
</feature>
<feature type="active site" evidence="2">
    <location>
        <position position="9"/>
    </location>
</feature>
<feature type="modified residue" description="N-acetylalanine" evidence="5">
    <location>
        <position position="2"/>
    </location>
</feature>
<feature type="splice variant" id="VSP_044453" description="In isoform 3." evidence="3">
    <location>
        <begin position="1"/>
        <end position="68"/>
    </location>
</feature>
<feature type="splice variant" id="VSP_044454" description="In isoform 2." evidence="3">
    <original>M</original>
    <variation>MVQDGTFKTRDSTWTCESTRM</variation>
    <location>
        <position position="1"/>
    </location>
</feature>
<feature type="sequence variant" id="VAR_057709" description="In dbSNP:rs35960711.">
    <original>S</original>
    <variation>N</variation>
    <location>
        <position position="189"/>
    </location>
</feature>
<feature type="sequence variant" id="VAR_029512" description="In dbSNP:rs17324153.">
    <original>Q</original>
    <variation>R</variation>
    <location>
        <position position="338"/>
    </location>
</feature>
<feature type="sequence conflict" description="In Ref. 4; BAG58182." evidence="4" ref="4">
    <original>G</original>
    <variation>W</variation>
    <location>
        <position position="120"/>
    </location>
</feature>
<feature type="sequence conflict" description="In Ref. 7; AAH40492." evidence="4" ref="7">
    <original>P</original>
    <variation>H</variation>
    <location>
        <position position="298"/>
    </location>
</feature>
<name>SCRN1_HUMAN</name>
<organism>
    <name type="scientific">Homo sapiens</name>
    <name type="common">Human</name>
    <dbReference type="NCBI Taxonomy" id="9606"/>
    <lineage>
        <taxon>Eukaryota</taxon>
        <taxon>Metazoa</taxon>
        <taxon>Chordata</taxon>
        <taxon>Craniata</taxon>
        <taxon>Vertebrata</taxon>
        <taxon>Euteleostomi</taxon>
        <taxon>Mammalia</taxon>
        <taxon>Eutheria</taxon>
        <taxon>Euarchontoglires</taxon>
        <taxon>Primates</taxon>
        <taxon>Haplorrhini</taxon>
        <taxon>Catarrhini</taxon>
        <taxon>Hominidae</taxon>
        <taxon>Homo</taxon>
    </lineage>
</organism>
<evidence type="ECO:0000250" key="1"/>
<evidence type="ECO:0000255" key="2"/>
<evidence type="ECO:0000303" key="3">
    <source>
    </source>
</evidence>
<evidence type="ECO:0000305" key="4"/>
<evidence type="ECO:0007744" key="5">
    <source>
    </source>
</evidence>
<keyword id="KW-0007">Acetylation</keyword>
<keyword id="KW-0025">Alternative splicing</keyword>
<keyword id="KW-0963">Cytoplasm</keyword>
<keyword id="KW-0903">Direct protein sequencing</keyword>
<keyword id="KW-0268">Exocytosis</keyword>
<keyword id="KW-1267">Proteomics identification</keyword>
<keyword id="KW-1185">Reference proteome</keyword>
<protein>
    <recommendedName>
        <fullName>Secernin-1</fullName>
    </recommendedName>
</protein>
<gene>
    <name type="primary">SCRN1</name>
    <name type="synonym">KIAA0193</name>
</gene>
<comment type="function">
    <text evidence="1">Regulates exocytosis in mast cells. Increases both the extent of secretion and the sensitivity of mast cells to stimulation with calcium (By similarity).</text>
</comment>
<comment type="interaction">
    <interactant intactId="EBI-2690712">
        <id>Q12765</id>
    </interactant>
    <interactant intactId="EBI-2561458">
        <id>Q9BQQ3</id>
        <label>GORASP1</label>
    </interactant>
    <organismsDiffer>false</organismsDiffer>
    <experiments>3</experiments>
</comment>
<comment type="interaction">
    <interactant intactId="EBI-2690712">
        <id>Q12765</id>
    </interactant>
    <interactant intactId="EBI-366233">
        <id>P10636-8</id>
        <label>MAPT</label>
    </interactant>
    <organismsDiffer>false</organismsDiffer>
    <experiments>5</experiments>
</comment>
<comment type="interaction">
    <interactant intactId="EBI-2690712">
        <id>Q12765</id>
    </interactant>
    <interactant intactId="EBI-21882666">
        <id>Q9HBV1</id>
        <label>POPDC3</label>
    </interactant>
    <organismsDiffer>false</organismsDiffer>
    <experiments>2</experiments>
</comment>
<comment type="interaction">
    <interactant intactId="EBI-12027936">
        <id>Q12765-2</id>
    </interactant>
    <interactant intactId="EBI-742054">
        <id>Q96D03</id>
        <label>DDIT4L</label>
    </interactant>
    <organismsDiffer>false</organismsDiffer>
    <experiments>3</experiments>
</comment>
<comment type="interaction">
    <interactant intactId="EBI-12027936">
        <id>Q12765-2</id>
    </interactant>
    <interactant intactId="EBI-2561458">
        <id>Q9BQQ3</id>
        <label>GORASP1</label>
    </interactant>
    <organismsDiffer>false</organismsDiffer>
    <experiments>3</experiments>
</comment>
<comment type="interaction">
    <interactant intactId="EBI-12027936">
        <id>Q12765-2</id>
    </interactant>
    <interactant intactId="EBI-466029">
        <id>P42858</id>
        <label>HTT</label>
    </interactant>
    <organismsDiffer>false</organismsDiffer>
    <experiments>3</experiments>
</comment>
<comment type="interaction">
    <interactant intactId="EBI-12027936">
        <id>Q12765-2</id>
    </interactant>
    <interactant intactId="EBI-7934204">
        <id>P17030</id>
        <label>ZNF25</label>
    </interactant>
    <organismsDiffer>false</organismsDiffer>
    <experiments>3</experiments>
</comment>
<comment type="subcellular location">
    <subcellularLocation>
        <location evidence="1">Cytoplasm</location>
    </subcellularLocation>
</comment>
<comment type="alternative products">
    <event type="alternative splicing"/>
    <isoform>
        <id>Q12765-1</id>
        <name>1</name>
        <sequence type="displayed"/>
    </isoform>
    <isoform>
        <id>Q12765-2</id>
        <name>2</name>
        <sequence type="described" ref="VSP_044454"/>
    </isoform>
    <isoform>
        <id>Q12765-3</id>
        <name>3</name>
        <sequence type="described" ref="VSP_044453"/>
    </isoform>
</comment>
<comment type="miscellaneous">
    <text>'Secern' is an archaic English term meaning 'secrete'.</text>
</comment>
<comment type="similarity">
    <text evidence="4">Belongs to the peptidase C69 family. Secernin subfamily.</text>
</comment>
<comment type="sequence caution" evidence="4">
    <conflict type="erroneous initiation">
        <sequence resource="EMBL-CDS" id="BAA12106"/>
    </conflict>
</comment>
<reference key="1">
    <citation type="journal article" date="2006" name="Cancer Sci.">
        <title>Identification of secernin 1 as a novel immunotherapy target for gastric cancer using the expression profiles of cDNA microarray.</title>
        <authorList>
            <person name="Suda T."/>
            <person name="Tsunoda T."/>
            <person name="Uchida N."/>
            <person name="Watanabe T."/>
            <person name="Hasegawa S."/>
            <person name="Satoh S."/>
            <person name="Ohgi S."/>
            <person name="Furukawa Y."/>
            <person name="Nakamura Y."/>
            <person name="Tahara H."/>
        </authorList>
    </citation>
    <scope>NUCLEOTIDE SEQUENCE [MRNA] (ISOFORM 1)</scope>
    <source>
        <tissue>Brain</tissue>
    </source>
</reference>
<reference key="2">
    <citation type="journal article" date="1996" name="DNA Res.">
        <title>Prediction of the coding sequences of unidentified human genes. V. The coding sequences of 40 new genes (KIAA0161-KIAA0200) deduced by analysis of cDNA clones from human cell line KG-1.</title>
        <authorList>
            <person name="Nagase T."/>
            <person name="Seki N."/>
            <person name="Ishikawa K."/>
            <person name="Tanaka A."/>
            <person name="Nomura N."/>
        </authorList>
    </citation>
    <scope>NUCLEOTIDE SEQUENCE [LARGE SCALE MRNA] (ISOFORM 1)</scope>
    <source>
        <tissue>Bone marrow</tissue>
    </source>
</reference>
<reference key="3">
    <citation type="journal article" date="2002" name="DNA Res.">
        <title>Construction of expression-ready cDNA clones for KIAA genes: manual curation of 330 KIAA cDNA clones.</title>
        <authorList>
            <person name="Nakajima D."/>
            <person name="Okazaki N."/>
            <person name="Yamakawa H."/>
            <person name="Kikuno R."/>
            <person name="Ohara O."/>
            <person name="Nagase T."/>
        </authorList>
    </citation>
    <scope>SEQUENCE REVISION TO N-TERMINUS</scope>
</reference>
<reference key="4">
    <citation type="journal article" date="2004" name="Nat. Genet.">
        <title>Complete sequencing and characterization of 21,243 full-length human cDNAs.</title>
        <authorList>
            <person name="Ota T."/>
            <person name="Suzuki Y."/>
            <person name="Nishikawa T."/>
            <person name="Otsuki T."/>
            <person name="Sugiyama T."/>
            <person name="Irie R."/>
            <person name="Wakamatsu A."/>
            <person name="Hayashi K."/>
            <person name="Sato H."/>
            <person name="Nagai K."/>
            <person name="Kimura K."/>
            <person name="Makita H."/>
            <person name="Sekine M."/>
            <person name="Obayashi M."/>
            <person name="Nishi T."/>
            <person name="Shibahara T."/>
            <person name="Tanaka T."/>
            <person name="Ishii S."/>
            <person name="Yamamoto J."/>
            <person name="Saito K."/>
            <person name="Kawai Y."/>
            <person name="Isono Y."/>
            <person name="Nakamura Y."/>
            <person name="Nagahari K."/>
            <person name="Murakami K."/>
            <person name="Yasuda T."/>
            <person name="Iwayanagi T."/>
            <person name="Wagatsuma M."/>
            <person name="Shiratori A."/>
            <person name="Sudo H."/>
            <person name="Hosoiri T."/>
            <person name="Kaku Y."/>
            <person name="Kodaira H."/>
            <person name="Kondo H."/>
            <person name="Sugawara M."/>
            <person name="Takahashi M."/>
            <person name="Kanda K."/>
            <person name="Yokoi T."/>
            <person name="Furuya T."/>
            <person name="Kikkawa E."/>
            <person name="Omura Y."/>
            <person name="Abe K."/>
            <person name="Kamihara K."/>
            <person name="Katsuta N."/>
            <person name="Sato K."/>
            <person name="Tanikawa M."/>
            <person name="Yamazaki M."/>
            <person name="Ninomiya K."/>
            <person name="Ishibashi T."/>
            <person name="Yamashita H."/>
            <person name="Murakawa K."/>
            <person name="Fujimori K."/>
            <person name="Tanai H."/>
            <person name="Kimata M."/>
            <person name="Watanabe M."/>
            <person name="Hiraoka S."/>
            <person name="Chiba Y."/>
            <person name="Ishida S."/>
            <person name="Ono Y."/>
            <person name="Takiguchi S."/>
            <person name="Watanabe S."/>
            <person name="Yosida M."/>
            <person name="Hotuta T."/>
            <person name="Kusano J."/>
            <person name="Kanehori K."/>
            <person name="Takahashi-Fujii A."/>
            <person name="Hara H."/>
            <person name="Tanase T.-O."/>
            <person name="Nomura Y."/>
            <person name="Togiya S."/>
            <person name="Komai F."/>
            <person name="Hara R."/>
            <person name="Takeuchi K."/>
            <person name="Arita M."/>
            <person name="Imose N."/>
            <person name="Musashino K."/>
            <person name="Yuuki H."/>
            <person name="Oshima A."/>
            <person name="Sasaki N."/>
            <person name="Aotsuka S."/>
            <person name="Yoshikawa Y."/>
            <person name="Matsunawa H."/>
            <person name="Ichihara T."/>
            <person name="Shiohata N."/>
            <person name="Sano S."/>
            <person name="Moriya S."/>
            <person name="Momiyama H."/>
            <person name="Satoh N."/>
            <person name="Takami S."/>
            <person name="Terashima Y."/>
            <person name="Suzuki O."/>
            <person name="Nakagawa S."/>
            <person name="Senoh A."/>
            <person name="Mizoguchi H."/>
            <person name="Goto Y."/>
            <person name="Shimizu F."/>
            <person name="Wakebe H."/>
            <person name="Hishigaki H."/>
            <person name="Watanabe T."/>
            <person name="Sugiyama A."/>
            <person name="Takemoto M."/>
            <person name="Kawakami B."/>
            <person name="Yamazaki M."/>
            <person name="Watanabe K."/>
            <person name="Kumagai A."/>
            <person name="Itakura S."/>
            <person name="Fukuzumi Y."/>
            <person name="Fujimori Y."/>
            <person name="Komiyama M."/>
            <person name="Tashiro H."/>
            <person name="Tanigami A."/>
            <person name="Fujiwara T."/>
            <person name="Ono T."/>
            <person name="Yamada K."/>
            <person name="Fujii Y."/>
            <person name="Ozaki K."/>
            <person name="Hirao M."/>
            <person name="Ohmori Y."/>
            <person name="Kawabata A."/>
            <person name="Hikiji T."/>
            <person name="Kobatake N."/>
            <person name="Inagaki H."/>
            <person name="Ikema Y."/>
            <person name="Okamoto S."/>
            <person name="Okitani R."/>
            <person name="Kawakami T."/>
            <person name="Noguchi S."/>
            <person name="Itoh T."/>
            <person name="Shigeta K."/>
            <person name="Senba T."/>
            <person name="Matsumura K."/>
            <person name="Nakajima Y."/>
            <person name="Mizuno T."/>
            <person name="Morinaga M."/>
            <person name="Sasaki M."/>
            <person name="Togashi T."/>
            <person name="Oyama M."/>
            <person name="Hata H."/>
            <person name="Watanabe M."/>
            <person name="Komatsu T."/>
            <person name="Mizushima-Sugano J."/>
            <person name="Satoh T."/>
            <person name="Shirai Y."/>
            <person name="Takahashi Y."/>
            <person name="Nakagawa K."/>
            <person name="Okumura K."/>
            <person name="Nagase T."/>
            <person name="Nomura N."/>
            <person name="Kikuchi H."/>
            <person name="Masuho Y."/>
            <person name="Yamashita R."/>
            <person name="Nakai K."/>
            <person name="Yada T."/>
            <person name="Nakamura Y."/>
            <person name="Ohara O."/>
            <person name="Isogai T."/>
            <person name="Sugano S."/>
        </authorList>
    </citation>
    <scope>NUCLEOTIDE SEQUENCE [LARGE SCALE MRNA] (ISOFORMS 1; 2 AND 3)</scope>
    <source>
        <tissue>Brain</tissue>
        <tissue>Cerebellum</tissue>
        <tissue>Hippocampus</tissue>
    </source>
</reference>
<reference key="5">
    <citation type="journal article" date="2003" name="Nature">
        <title>The DNA sequence of human chromosome 7.</title>
        <authorList>
            <person name="Hillier L.W."/>
            <person name="Fulton R.S."/>
            <person name="Fulton L.A."/>
            <person name="Graves T.A."/>
            <person name="Pepin K.H."/>
            <person name="Wagner-McPherson C."/>
            <person name="Layman D."/>
            <person name="Maas J."/>
            <person name="Jaeger S."/>
            <person name="Walker R."/>
            <person name="Wylie K."/>
            <person name="Sekhon M."/>
            <person name="Becker M.C."/>
            <person name="O'Laughlin M.D."/>
            <person name="Schaller M.E."/>
            <person name="Fewell G.A."/>
            <person name="Delehaunty K.D."/>
            <person name="Miner T.L."/>
            <person name="Nash W.E."/>
            <person name="Cordes M."/>
            <person name="Du H."/>
            <person name="Sun H."/>
            <person name="Edwards J."/>
            <person name="Bradshaw-Cordum H."/>
            <person name="Ali J."/>
            <person name="Andrews S."/>
            <person name="Isak A."/>
            <person name="Vanbrunt A."/>
            <person name="Nguyen C."/>
            <person name="Du F."/>
            <person name="Lamar B."/>
            <person name="Courtney L."/>
            <person name="Kalicki J."/>
            <person name="Ozersky P."/>
            <person name="Bielicki L."/>
            <person name="Scott K."/>
            <person name="Holmes A."/>
            <person name="Harkins R."/>
            <person name="Harris A."/>
            <person name="Strong C.M."/>
            <person name="Hou S."/>
            <person name="Tomlinson C."/>
            <person name="Dauphin-Kohlberg S."/>
            <person name="Kozlowicz-Reilly A."/>
            <person name="Leonard S."/>
            <person name="Rohlfing T."/>
            <person name="Rock S.M."/>
            <person name="Tin-Wollam A.-M."/>
            <person name="Abbott A."/>
            <person name="Minx P."/>
            <person name="Maupin R."/>
            <person name="Strowmatt C."/>
            <person name="Latreille P."/>
            <person name="Miller N."/>
            <person name="Johnson D."/>
            <person name="Murray J."/>
            <person name="Woessner J.P."/>
            <person name="Wendl M.C."/>
            <person name="Yang S.-P."/>
            <person name="Schultz B.R."/>
            <person name="Wallis J.W."/>
            <person name="Spieth J."/>
            <person name="Bieri T.A."/>
            <person name="Nelson J.O."/>
            <person name="Berkowicz N."/>
            <person name="Wohldmann P.E."/>
            <person name="Cook L.L."/>
            <person name="Hickenbotham M.T."/>
            <person name="Eldred J."/>
            <person name="Williams D."/>
            <person name="Bedell J.A."/>
            <person name="Mardis E.R."/>
            <person name="Clifton S.W."/>
            <person name="Chissoe S.L."/>
            <person name="Marra M.A."/>
            <person name="Raymond C."/>
            <person name="Haugen E."/>
            <person name="Gillett W."/>
            <person name="Zhou Y."/>
            <person name="James R."/>
            <person name="Phelps K."/>
            <person name="Iadanoto S."/>
            <person name="Bubb K."/>
            <person name="Simms E."/>
            <person name="Levy R."/>
            <person name="Clendenning J."/>
            <person name="Kaul R."/>
            <person name="Kent W.J."/>
            <person name="Furey T.S."/>
            <person name="Baertsch R.A."/>
            <person name="Brent M.R."/>
            <person name="Keibler E."/>
            <person name="Flicek P."/>
            <person name="Bork P."/>
            <person name="Suyama M."/>
            <person name="Bailey J.A."/>
            <person name="Portnoy M.E."/>
            <person name="Torrents D."/>
            <person name="Chinwalla A.T."/>
            <person name="Gish W.R."/>
            <person name="Eddy S.R."/>
            <person name="McPherson J.D."/>
            <person name="Olson M.V."/>
            <person name="Eichler E.E."/>
            <person name="Green E.D."/>
            <person name="Waterston R.H."/>
            <person name="Wilson R.K."/>
        </authorList>
    </citation>
    <scope>NUCLEOTIDE SEQUENCE [LARGE SCALE GENOMIC DNA]</scope>
</reference>
<reference key="6">
    <citation type="submission" date="2005-07" db="EMBL/GenBank/DDBJ databases">
        <authorList>
            <person name="Mural R.J."/>
            <person name="Istrail S."/>
            <person name="Sutton G.G."/>
            <person name="Florea L."/>
            <person name="Halpern A.L."/>
            <person name="Mobarry C.M."/>
            <person name="Lippert R."/>
            <person name="Walenz B."/>
            <person name="Shatkay H."/>
            <person name="Dew I."/>
            <person name="Miller J.R."/>
            <person name="Flanigan M.J."/>
            <person name="Edwards N.J."/>
            <person name="Bolanos R."/>
            <person name="Fasulo D."/>
            <person name="Halldorsson B.V."/>
            <person name="Hannenhalli S."/>
            <person name="Turner R."/>
            <person name="Yooseph S."/>
            <person name="Lu F."/>
            <person name="Nusskern D.R."/>
            <person name="Shue B.C."/>
            <person name="Zheng X.H."/>
            <person name="Zhong F."/>
            <person name="Delcher A.L."/>
            <person name="Huson D.H."/>
            <person name="Kravitz S.A."/>
            <person name="Mouchard L."/>
            <person name="Reinert K."/>
            <person name="Remington K.A."/>
            <person name="Clark A.G."/>
            <person name="Waterman M.S."/>
            <person name="Eichler E.E."/>
            <person name="Adams M.D."/>
            <person name="Hunkapiller M.W."/>
            <person name="Myers E.W."/>
            <person name="Venter J.C."/>
        </authorList>
    </citation>
    <scope>NUCLEOTIDE SEQUENCE [LARGE SCALE GENOMIC DNA]</scope>
</reference>
<reference key="7">
    <citation type="journal article" date="2004" name="Genome Res.">
        <title>The status, quality, and expansion of the NIH full-length cDNA project: the Mammalian Gene Collection (MGC).</title>
        <authorList>
            <consortium name="The MGC Project Team"/>
        </authorList>
    </citation>
    <scope>NUCLEOTIDE SEQUENCE [LARGE SCALE MRNA] (ISOFORM 1)</scope>
    <source>
        <tissue>Hypothalamus</tissue>
    </source>
</reference>
<reference key="8">
    <citation type="submission" date="2008-12" db="UniProtKB">
        <authorList>
            <person name="Lubec G."/>
            <person name="Chen W.-Q."/>
            <person name="Sun Y."/>
        </authorList>
    </citation>
    <scope>PROTEIN SEQUENCE OF 52-64; 99-114; 163-173 AND 186-196</scope>
    <scope>IDENTIFICATION BY MASS SPECTROMETRY</scope>
    <source>
        <tissue>Fetal brain cortex</tissue>
    </source>
</reference>
<reference key="9">
    <citation type="journal article" date="2002" name="Proteomics">
        <title>Towards complete analysis of the platelet proteome.</title>
        <authorList>
            <person name="O'Neill E.E."/>
            <person name="Brock C.J."/>
            <person name="von Kriegsheim A.F."/>
            <person name="Pearce A.C."/>
            <person name="Dwek R.A."/>
            <person name="Watson S.P."/>
            <person name="Hebestreit H.F."/>
        </authorList>
    </citation>
    <scope>IDENTIFICATION BY MASS SPECTROMETRY</scope>
    <source>
        <tissue>Platelet</tissue>
    </source>
</reference>
<reference key="10">
    <citation type="journal article" date="2011" name="BMC Syst. Biol.">
        <title>Initial characterization of the human central proteome.</title>
        <authorList>
            <person name="Burkard T.R."/>
            <person name="Planyavsky M."/>
            <person name="Kaupe I."/>
            <person name="Breitwieser F.P."/>
            <person name="Buerckstuemmer T."/>
            <person name="Bennett K.L."/>
            <person name="Superti-Furga G."/>
            <person name="Colinge J."/>
        </authorList>
    </citation>
    <scope>IDENTIFICATION BY MASS SPECTROMETRY [LARGE SCALE ANALYSIS]</scope>
</reference>
<reference key="11">
    <citation type="journal article" date="2012" name="Mol. Cell. Proteomics">
        <title>Comparative large-scale characterisation of plant vs. mammal proteins reveals similar and idiosyncratic N-alpha acetylation features.</title>
        <authorList>
            <person name="Bienvenut W.V."/>
            <person name="Sumpton D."/>
            <person name="Martinez A."/>
            <person name="Lilla S."/>
            <person name="Espagne C."/>
            <person name="Meinnel T."/>
            <person name="Giglione C."/>
        </authorList>
    </citation>
    <scope>ACETYLATION [LARGE SCALE ANALYSIS] AT ALA-2</scope>
    <scope>CLEAVAGE OF INITIATOR METHIONINE [LARGE SCALE ANALYSIS]</scope>
    <scope>IDENTIFICATION BY MASS SPECTROMETRY [LARGE SCALE ANALYSIS]</scope>
</reference>